<organism>
    <name type="scientific">Nostoc commune</name>
    <dbReference type="NCBI Taxonomy" id="1178"/>
    <lineage>
        <taxon>Bacteria</taxon>
        <taxon>Bacillati</taxon>
        <taxon>Cyanobacteriota</taxon>
        <taxon>Cyanophyceae</taxon>
        <taxon>Nostocales</taxon>
        <taxon>Nostocaceae</taxon>
        <taxon>Nostoc</taxon>
    </lineage>
</organism>
<name>NIFD_NOSCO</name>
<evidence type="ECO:0000250" key="1"/>
<evidence type="ECO:0000305" key="2"/>
<feature type="chain" id="PRO_0000153076" description="Nitrogenase molybdenum-iron protein alpha chain">
    <location>
        <begin position="1"/>
        <end position="296" status="greater than"/>
    </location>
</feature>
<feature type="binding site" evidence="1">
    <location>
        <position position="64"/>
    </location>
    <ligand>
        <name>[8Fe-7S] cluster</name>
        <dbReference type="ChEBI" id="CHEBI:21143"/>
        <note>ligand shared with beta chain</note>
    </ligand>
</feature>
<feature type="binding site" evidence="1">
    <location>
        <position position="90"/>
    </location>
    <ligand>
        <name>[8Fe-7S] cluster</name>
        <dbReference type="ChEBI" id="CHEBI:21143"/>
        <note>ligand shared with beta chain</note>
    </ligand>
</feature>
<feature type="binding site" evidence="1">
    <location>
        <position position="156"/>
    </location>
    <ligand>
        <name>[8Fe-7S] cluster</name>
        <dbReference type="ChEBI" id="CHEBI:21143"/>
        <note>ligand shared with beta chain</note>
    </ligand>
</feature>
<feature type="binding site" evidence="1">
    <location>
        <position position="282"/>
    </location>
    <ligand>
        <name>[7Fe-Mo-9S-C-homocitryl] cluster</name>
        <dbReference type="ChEBI" id="CHEBI:30409"/>
    </ligand>
</feature>
<feature type="non-terminal residue">
    <location>
        <position position="296"/>
    </location>
</feature>
<reference key="1">
    <citation type="journal article" date="1994" name="Gene">
        <title>Analysis of the sequences within and flanking the cyanoglobin-encoding gene, glbN, of the cyanobacterium Nostoc commune UTEX 584.</title>
        <authorList>
            <person name="Angeloni S.V."/>
            <person name="Potts M."/>
        </authorList>
    </citation>
    <scope>NUCLEOTIDE SEQUENCE [GENOMIC DNA]</scope>
    <source>
        <strain>UTEX 584 / SAG 1453-5</strain>
    </source>
</reference>
<accession>P52337</accession>
<sequence length="296" mass="32987">MTPPENQNIIEERKELIKEVLSAYPEKAAKKREKHLSVYEEGKSDCGVKSNIKSLPGVMTARGCAYAGSKGVVWGPIKDMIHISHGPVGCGYWSWSGRRNYYIGTTGIDTFGTMHFTSDFQERDIVFGGDKKLVKLIQELDVLFPLNRGVSIQSECPIGLIGDDIEAVARKTSKEIGKPVVPVRCEGFRGVSQSLGHHIANDMVRDWVFTRSDQAKKDGTLKFEGTPYDVAIIGDYNIGGDAWASRILLEEIALRVVAQWSGDGTINEMLMTPNVKMNLIHCYRSMNYISRHMEEA</sequence>
<comment type="function">
    <text>This molybdenum-iron protein is part of the nitrogenase complex that catalyzes the key enzymatic reactions in nitrogen fixation.</text>
</comment>
<comment type="catalytic activity">
    <reaction>
        <text>N2 + 8 reduced [2Fe-2S]-[ferredoxin] + 16 ATP + 16 H2O = H2 + 8 oxidized [2Fe-2S]-[ferredoxin] + 2 NH4(+) + 16 ADP + 16 phosphate + 6 H(+)</text>
        <dbReference type="Rhea" id="RHEA:21448"/>
        <dbReference type="Rhea" id="RHEA-COMP:10000"/>
        <dbReference type="Rhea" id="RHEA-COMP:10001"/>
        <dbReference type="ChEBI" id="CHEBI:15377"/>
        <dbReference type="ChEBI" id="CHEBI:15378"/>
        <dbReference type="ChEBI" id="CHEBI:17997"/>
        <dbReference type="ChEBI" id="CHEBI:18276"/>
        <dbReference type="ChEBI" id="CHEBI:28938"/>
        <dbReference type="ChEBI" id="CHEBI:30616"/>
        <dbReference type="ChEBI" id="CHEBI:33737"/>
        <dbReference type="ChEBI" id="CHEBI:33738"/>
        <dbReference type="ChEBI" id="CHEBI:43474"/>
        <dbReference type="ChEBI" id="CHEBI:456216"/>
        <dbReference type="EC" id="1.18.6.1"/>
    </reaction>
</comment>
<comment type="cofactor">
    <cofactor evidence="1">
        <name>[8Fe-7S] cluster</name>
        <dbReference type="ChEBI" id="CHEBI:21143"/>
    </cofactor>
    <text evidence="1">Binds 1 [8Fe-7S] cluster per heterodimer.</text>
</comment>
<comment type="cofactor">
    <cofactor evidence="1">
        <name>[7Fe-Mo-9S-C-homocitryl] cluster</name>
        <dbReference type="ChEBI" id="CHEBI:30409"/>
    </cofactor>
    <text evidence="1">Binds 1 [7Fe-Mo-9S-C-homocitryl] cluster per subunit.</text>
</comment>
<comment type="subunit">
    <text>Tetramer of two alpha and two beta chains. Forms complex with the iron protein (nitrogenase component 2).</text>
</comment>
<comment type="similarity">
    <text evidence="2">Belongs to the NifD/NifK/NifE/NifN family.</text>
</comment>
<keyword id="KW-0067">ATP-binding</keyword>
<keyword id="KW-0408">Iron</keyword>
<keyword id="KW-0411">Iron-sulfur</keyword>
<keyword id="KW-0479">Metal-binding</keyword>
<keyword id="KW-0500">Molybdenum</keyword>
<keyword id="KW-0535">Nitrogen fixation</keyword>
<keyword id="KW-0547">Nucleotide-binding</keyword>
<keyword id="KW-0560">Oxidoreductase</keyword>
<proteinExistence type="inferred from homology"/>
<gene>
    <name type="primary">nifD</name>
</gene>
<dbReference type="EC" id="1.18.6.1"/>
<dbReference type="EMBL" id="L23514">
    <property type="protein sequence ID" value="AAA21839.1"/>
    <property type="molecule type" value="Genomic_DNA"/>
</dbReference>
<dbReference type="SMR" id="P52337"/>
<dbReference type="GO" id="GO:0005524">
    <property type="term" value="F:ATP binding"/>
    <property type="evidence" value="ECO:0007669"/>
    <property type="project" value="UniProtKB-KW"/>
</dbReference>
<dbReference type="GO" id="GO:0051536">
    <property type="term" value="F:iron-sulfur cluster binding"/>
    <property type="evidence" value="ECO:0007669"/>
    <property type="project" value="UniProtKB-KW"/>
</dbReference>
<dbReference type="GO" id="GO:0046872">
    <property type="term" value="F:metal ion binding"/>
    <property type="evidence" value="ECO:0007669"/>
    <property type="project" value="UniProtKB-KW"/>
</dbReference>
<dbReference type="GO" id="GO:0016163">
    <property type="term" value="F:nitrogenase activity"/>
    <property type="evidence" value="ECO:0007669"/>
    <property type="project" value="UniProtKB-EC"/>
</dbReference>
<dbReference type="GO" id="GO:0009399">
    <property type="term" value="P:nitrogen fixation"/>
    <property type="evidence" value="ECO:0007669"/>
    <property type="project" value="UniProtKB-KW"/>
</dbReference>
<dbReference type="Gene3D" id="3.40.50.1980">
    <property type="entry name" value="Nitrogenase molybdenum iron protein domain"/>
    <property type="match status" value="3"/>
</dbReference>
<dbReference type="InterPro" id="IPR000510">
    <property type="entry name" value="Nase/OxRdtase_comp1"/>
</dbReference>
<dbReference type="InterPro" id="IPR010143">
    <property type="entry name" value="Nase_comp1_asu"/>
</dbReference>
<dbReference type="InterPro" id="IPR000318">
    <property type="entry name" value="Nase_comp1_CS"/>
</dbReference>
<dbReference type="PANTHER" id="PTHR43457">
    <property type="entry name" value="NITROGENASE MOLYBDENUM-IRON PROTEIN ALPHA CHAIN"/>
    <property type="match status" value="1"/>
</dbReference>
<dbReference type="PANTHER" id="PTHR43457:SF1">
    <property type="entry name" value="NITROGENASE MOLYBDENUM-IRON PROTEIN ALPHA CHAIN"/>
    <property type="match status" value="1"/>
</dbReference>
<dbReference type="Pfam" id="PF00148">
    <property type="entry name" value="Oxidored_nitro"/>
    <property type="match status" value="1"/>
</dbReference>
<dbReference type="SUPFAM" id="SSF53807">
    <property type="entry name" value="Helical backbone' metal receptor"/>
    <property type="match status" value="1"/>
</dbReference>
<dbReference type="PROSITE" id="PS00699">
    <property type="entry name" value="NITROGENASE_1_1"/>
    <property type="match status" value="1"/>
</dbReference>
<dbReference type="PROSITE" id="PS00090">
    <property type="entry name" value="NITROGENASE_1_2"/>
    <property type="match status" value="1"/>
</dbReference>
<protein>
    <recommendedName>
        <fullName>Nitrogenase molybdenum-iron protein alpha chain</fullName>
        <ecNumber>1.18.6.1</ecNumber>
    </recommendedName>
    <alternativeName>
        <fullName>Dinitrogenase</fullName>
    </alternativeName>
    <alternativeName>
        <fullName>Nitrogenase component I</fullName>
    </alternativeName>
</protein>